<comment type="function">
    <text evidence="3 7">Cytochrome P450 monooxygenase; part of the gene cluster that mediates the biosynthesis of dibenzodioxocinones such as pestalotiollide B, a novel class of inhibitors against cholesterol ester transfer protein (CEPT) (PubMed:31474098). The biosynthesis initiates from condensation of acetate and malonate units catalyzed by the non-reducing PKS pks8/GME11356. Pks8/GME11356 lacks a thioesterase (TE) domain, which is important to the cyclizing of the third ring of atrochrysone carboxylic acid, and the esterase GME11355 might play the role of TE and catalyzes the cyclization reaction of the C ring. The lactamase-like protein GME11357 (or other beta-lactamases in Pestalotiopsis microspora) probably hydrolyzes the thioester bond between the ACP of pks8/GME11356 and the intermediate to release atrochrysone carboxylic acid, which is spontaneously dehydrates to form endocrocin anthrone. Endocrocin anthrone is further converted to emodin via the endocrocin intermediate. Emodin is then oxidized by several enzymes such as the Baeyer-Villiger oxidase GME11358, the oxidoreductase GME11367, the short chain dehydrogenase/reductase GME11373, as well as by other oxidoreductases from the cluster, to modify the A and C rings and open the B ring, and finally yield monodictyphenone. The prenyltransferase GME11375 may catalyze the addition reaction between the C5 side chains and the carbon bone of dibenzodioxocinones. The remaining biochemical reactions to the final product dibenzodioxocinones should be methylation catalyzed by methyltransferase GME11366 and reduction and lactonization reaction catalyzed by a series of oxidordeuctases (Probable).</text>
</comment>
<comment type="cofactor">
    <cofactor evidence="1">
        <name>heme</name>
        <dbReference type="ChEBI" id="CHEBI:30413"/>
    </cofactor>
</comment>
<comment type="pathway">
    <text evidence="7">Secondary metabolite biosynthesis.</text>
</comment>
<comment type="subcellular location">
    <subcellularLocation>
        <location evidence="2">Membrane</location>
        <topology evidence="2">Single-pass membrane protein</topology>
    </subcellularLocation>
</comment>
<comment type="induction">
    <text evidence="4">The expression of the dibenzodioxocinones biosynthesis cluster is positively regulated by the transcription factor dibT.</text>
</comment>
<comment type="similarity">
    <text evidence="6">Belongs to the cytochrome P450 family.</text>
</comment>
<gene>
    <name evidence="5" type="ORF">GME11363</name>
</gene>
<keyword id="KW-0349">Heme</keyword>
<keyword id="KW-0408">Iron</keyword>
<keyword id="KW-0472">Membrane</keyword>
<keyword id="KW-0479">Metal-binding</keyword>
<keyword id="KW-0503">Monooxygenase</keyword>
<keyword id="KW-0560">Oxidoreductase</keyword>
<keyword id="KW-0812">Transmembrane</keyword>
<keyword id="KW-1133">Transmembrane helix</keyword>
<dbReference type="EC" id="1.-.-.-" evidence="7"/>
<dbReference type="EMBL" id="MK590982">
    <property type="protein sequence ID" value="QED41494.1"/>
    <property type="molecule type" value="mRNA"/>
</dbReference>
<dbReference type="GO" id="GO:0016020">
    <property type="term" value="C:membrane"/>
    <property type="evidence" value="ECO:0007669"/>
    <property type="project" value="UniProtKB-SubCell"/>
</dbReference>
<dbReference type="GO" id="GO:0020037">
    <property type="term" value="F:heme binding"/>
    <property type="evidence" value="ECO:0007669"/>
    <property type="project" value="InterPro"/>
</dbReference>
<dbReference type="GO" id="GO:0005506">
    <property type="term" value="F:iron ion binding"/>
    <property type="evidence" value="ECO:0007669"/>
    <property type="project" value="InterPro"/>
</dbReference>
<dbReference type="GO" id="GO:0004497">
    <property type="term" value="F:monooxygenase activity"/>
    <property type="evidence" value="ECO:0007669"/>
    <property type="project" value="UniProtKB-KW"/>
</dbReference>
<dbReference type="GO" id="GO:0016705">
    <property type="term" value="F:oxidoreductase activity, acting on paired donors, with incorporation or reduction of molecular oxygen"/>
    <property type="evidence" value="ECO:0007669"/>
    <property type="project" value="InterPro"/>
</dbReference>
<dbReference type="Gene3D" id="1.10.630.10">
    <property type="entry name" value="Cytochrome P450"/>
    <property type="match status" value="1"/>
</dbReference>
<dbReference type="InterPro" id="IPR001128">
    <property type="entry name" value="Cyt_P450"/>
</dbReference>
<dbReference type="InterPro" id="IPR017972">
    <property type="entry name" value="Cyt_P450_CS"/>
</dbReference>
<dbReference type="InterPro" id="IPR002401">
    <property type="entry name" value="Cyt_P450_E_grp-I"/>
</dbReference>
<dbReference type="InterPro" id="IPR036396">
    <property type="entry name" value="Cyt_P450_sf"/>
</dbReference>
<dbReference type="InterPro" id="IPR050121">
    <property type="entry name" value="Cytochrome_P450_monoxygenase"/>
</dbReference>
<dbReference type="PANTHER" id="PTHR24305">
    <property type="entry name" value="CYTOCHROME P450"/>
    <property type="match status" value="1"/>
</dbReference>
<dbReference type="PANTHER" id="PTHR24305:SF232">
    <property type="entry name" value="P450, PUTATIVE (EUROFUNG)-RELATED"/>
    <property type="match status" value="1"/>
</dbReference>
<dbReference type="Pfam" id="PF00067">
    <property type="entry name" value="p450"/>
    <property type="match status" value="2"/>
</dbReference>
<dbReference type="PRINTS" id="PR00463">
    <property type="entry name" value="EP450I"/>
</dbReference>
<dbReference type="PRINTS" id="PR00385">
    <property type="entry name" value="P450"/>
</dbReference>
<dbReference type="SUPFAM" id="SSF48264">
    <property type="entry name" value="Cytochrome P450"/>
    <property type="match status" value="1"/>
</dbReference>
<dbReference type="PROSITE" id="PS00086">
    <property type="entry name" value="CYTOCHROME_P450"/>
    <property type="match status" value="1"/>
</dbReference>
<name>GME63_PESMI</name>
<reference key="1">
    <citation type="journal article" date="2019" name="J. Microbiol. Biotechnol.">
        <title>A gene cluster for the biosynthesis of dibenzodioxocinons in the endophyte Pestalotiopsis microspora, a taxol producer.</title>
        <authorList>
            <person name="Liu Y."/>
            <person name="Chen L."/>
            <person name="Xie Q."/>
            <person name="Yu X."/>
            <person name="Duan A."/>
            <person name="Lin Y."/>
            <person name="Xiang B."/>
            <person name="Hao X."/>
            <person name="Chen W."/>
            <person name="Zhu X."/>
        </authorList>
    </citation>
    <scope>NUCLEOTIDE SEQUENCE [MRNA]</scope>
    <scope>FUNCTION</scope>
    <scope>PATHWAY</scope>
    <source>
        <strain>NK17</strain>
    </source>
</reference>
<reference key="2">
    <citation type="journal article" date="2022" name="Microbiol. Res.">
        <title>Acquiring novel chemicals by overexpression of a transcription factor DibT in the dibenzodioxocinone biosynthetic cluster in Pestalotiopsis microspora.</title>
        <authorList>
            <person name="Liu Y."/>
            <person name="Fu Y."/>
            <person name="Zhou M."/>
            <person name="Hao X."/>
            <person name="Zhang P."/>
            <person name="Zhu X."/>
        </authorList>
    </citation>
    <scope>INDUCTION</scope>
</reference>
<organism>
    <name type="scientific">Pestalotiopsis microspora</name>
    <dbReference type="NCBI Taxonomy" id="85828"/>
    <lineage>
        <taxon>Eukaryota</taxon>
        <taxon>Fungi</taxon>
        <taxon>Dikarya</taxon>
        <taxon>Ascomycota</taxon>
        <taxon>Pezizomycotina</taxon>
        <taxon>Sordariomycetes</taxon>
        <taxon>Xylariomycetidae</taxon>
        <taxon>Amphisphaeriales</taxon>
        <taxon>Sporocadaceae</taxon>
        <taxon>Pestalotiopsis</taxon>
    </lineage>
</organism>
<accession>A0A5B8YU73</accession>
<feature type="chain" id="PRO_0000456741" description="Cytochrome P450 monooxygenase GME11363">
    <location>
        <begin position="1"/>
        <end position="573"/>
    </location>
</feature>
<feature type="transmembrane region" description="Helical" evidence="2">
    <location>
        <begin position="10"/>
        <end position="30"/>
    </location>
</feature>
<feature type="binding site" description="axial binding residue" evidence="1">
    <location>
        <position position="519"/>
    </location>
    <ligand>
        <name>heme</name>
        <dbReference type="ChEBI" id="CHEBI:30413"/>
    </ligand>
    <ligandPart>
        <name>Fe</name>
        <dbReference type="ChEBI" id="CHEBI:18248"/>
    </ligandPart>
</feature>
<evidence type="ECO:0000250" key="1">
    <source>
        <dbReference type="UniProtKB" id="P04798"/>
    </source>
</evidence>
<evidence type="ECO:0000255" key="2"/>
<evidence type="ECO:0000269" key="3">
    <source>
    </source>
</evidence>
<evidence type="ECO:0000269" key="4">
    <source>
    </source>
</evidence>
<evidence type="ECO:0000303" key="5">
    <source>
    </source>
</evidence>
<evidence type="ECO:0000305" key="6"/>
<evidence type="ECO:0000305" key="7">
    <source>
    </source>
</evidence>
<proteinExistence type="evidence at transcript level"/>
<protein>
    <recommendedName>
        <fullName evidence="5">Cytochrome P450 monooxygenase GME11363</fullName>
        <ecNumber evidence="7">1.-.-.-</ecNumber>
    </recommendedName>
    <alternativeName>
        <fullName evidence="5">Dibenzodioxocinones biosynthesis cluster protein GME11363</fullName>
    </alternativeName>
</protein>
<sequence length="573" mass="63812">MHFSTSTSTIGVVAAVLLAALILLYRAALPKPIHGIPYKKGSEKRLLGDAPDLLKWRNETQEVFSYMRKLAKDLNSPVFQLFMRPMGKPWVVITDFREAYDICTNRREEFDRSAFTGEVFGPIVPNSHIQFATDDLWRSHRQLLRDTMSPMFVASVIGPIIHKSASGLVSLWRTKARLANGQPFDAEQDLARCLVDLIVSSSFGYDVKSLKAHEDSLSQKVVKGPKDVPMEFTAGEDTEACTSLITLASGVGMAIRSPFPKIVLPLALRFLPSFASAQRYTHNMISEQAGAAWNKFSKAVNVSRDEQVTSAMDLLVLREEQMARKEGRESRLDLPVVRDELLAFLFAGQETTGSTIGWSLKYLAMNQDIQKKLREELRAAHKRAAQTPGASPTSQEIVDTHIPYVEAFIAENHRFAVTISCMIRHTIKDAVVLGHVIPKGSDIFCLTNGPSYQSPSAPVDESVRSKSSQAAKDKFGVWDETNVGEFKPERWLEKQPNGELRFNRFAGPSNPFGVGPRACFGIKWADLIIKTMVTQIVWNFDIQETPEDLSGIEASDGASHRAQKTFVRLVALQ</sequence>